<reference key="1">
    <citation type="journal article" date="2004" name="Nat. Biotechnol.">
        <title>The genome sequence of the anaerobic, sulfate-reducing bacterium Desulfovibrio vulgaris Hildenborough.</title>
        <authorList>
            <person name="Heidelberg J.F."/>
            <person name="Seshadri R."/>
            <person name="Haveman S.A."/>
            <person name="Hemme C.L."/>
            <person name="Paulsen I.T."/>
            <person name="Kolonay J.F."/>
            <person name="Eisen J.A."/>
            <person name="Ward N.L."/>
            <person name="Methe B.A."/>
            <person name="Brinkac L.M."/>
            <person name="Daugherty S.C."/>
            <person name="DeBoy R.T."/>
            <person name="Dodson R.J."/>
            <person name="Durkin A.S."/>
            <person name="Madupu R."/>
            <person name="Nelson W.C."/>
            <person name="Sullivan S.A."/>
            <person name="Fouts D.E."/>
            <person name="Haft D.H."/>
            <person name="Selengut J."/>
            <person name="Peterson J.D."/>
            <person name="Davidsen T.M."/>
            <person name="Zafar N."/>
            <person name="Zhou L."/>
            <person name="Radune D."/>
            <person name="Dimitrov G."/>
            <person name="Hance M."/>
            <person name="Tran K."/>
            <person name="Khouri H.M."/>
            <person name="Gill J."/>
            <person name="Utterback T.R."/>
            <person name="Feldblyum T.V."/>
            <person name="Wall J.D."/>
            <person name="Voordouw G."/>
            <person name="Fraser C.M."/>
        </authorList>
    </citation>
    <scope>NUCLEOTIDE SEQUENCE [LARGE SCALE GENOMIC DNA]</scope>
    <source>
        <strain>ATCC 29579 / DSM 644 / CCUG 34227 / NCIMB 8303 / VKM B-1760 / Hildenborough</strain>
    </source>
</reference>
<protein>
    <recommendedName>
        <fullName evidence="1">3-isopropylmalate dehydratase large subunit</fullName>
        <ecNumber evidence="1">4.2.1.33</ecNumber>
    </recommendedName>
    <alternativeName>
        <fullName evidence="1">Alpha-IPM isomerase</fullName>
        <shortName evidence="1">IPMI</shortName>
    </alternativeName>
    <alternativeName>
        <fullName evidence="1">Isopropylmalate isomerase</fullName>
    </alternativeName>
</protein>
<sequence length="419" mass="43834">MAHTLAQKILQRHTDEAITDAGQIVRCRVSMVLANDITAPLAIKSFRAMGAKRVFDKDRVALVMDHFTPQKDIEAAQQVKLTREFAREMGVTHYYEGGDCGVEHALLPELGLVGPGDVVVGADSHTCTYGGLGAFATGLGSTDVAGAMALGETWFKVPPTIRATFTGTLPAYVGAKDLILTLIGAIGVDGALYRALEFDGAAIEALDVEGRMTMANMAIEAGGKAGLFAADAKTLTYCTTAGRTGDTAFSADAGAVYERELSFDVTGMTPVVACPHLPDNVKPVSEVKDVTVQQVVIGSCTNGRIGDLREAAAVLRGRKVSRDVRCIVLPATPGIWRQALREGLIETFMEAGCIVGPATCGPCLGGHMGILADGERAIATTNRNFKGRMGSLESEVYLSGPATAAASAVTGVITDPSTL</sequence>
<gene>
    <name evidence="1" type="primary">leuC</name>
    <name type="ordered locus">DVU_2982</name>
</gene>
<name>LEUC_NITV2</name>
<keyword id="KW-0004">4Fe-4S</keyword>
<keyword id="KW-0028">Amino-acid biosynthesis</keyword>
<keyword id="KW-0100">Branched-chain amino acid biosynthesis</keyword>
<keyword id="KW-0408">Iron</keyword>
<keyword id="KW-0411">Iron-sulfur</keyword>
<keyword id="KW-0432">Leucine biosynthesis</keyword>
<keyword id="KW-0456">Lyase</keyword>
<keyword id="KW-0479">Metal-binding</keyword>
<keyword id="KW-1185">Reference proteome</keyword>
<comment type="function">
    <text evidence="1">Catalyzes the isomerization between 2-isopropylmalate and 3-isopropylmalate, via the formation of 2-isopropylmaleate.</text>
</comment>
<comment type="catalytic activity">
    <reaction evidence="1">
        <text>(2R,3S)-3-isopropylmalate = (2S)-2-isopropylmalate</text>
        <dbReference type="Rhea" id="RHEA:32287"/>
        <dbReference type="ChEBI" id="CHEBI:1178"/>
        <dbReference type="ChEBI" id="CHEBI:35121"/>
        <dbReference type="EC" id="4.2.1.33"/>
    </reaction>
</comment>
<comment type="cofactor">
    <cofactor evidence="1">
        <name>[4Fe-4S] cluster</name>
        <dbReference type="ChEBI" id="CHEBI:49883"/>
    </cofactor>
    <text evidence="1">Binds 1 [4Fe-4S] cluster per subunit.</text>
</comment>
<comment type="pathway">
    <text evidence="1">Amino-acid biosynthesis; L-leucine biosynthesis; L-leucine from 3-methyl-2-oxobutanoate: step 2/4.</text>
</comment>
<comment type="subunit">
    <text evidence="1">Heterodimer of LeuC and LeuD.</text>
</comment>
<comment type="interaction">
    <interactant intactId="EBI-10066095">
        <id>Q726X4</id>
    </interactant>
    <interactant intactId="EBI-10066099">
        <id>Q726X3</id>
        <label>leuD</label>
    </interactant>
    <organismsDiffer>false</organismsDiffer>
    <experiments>3</experiments>
</comment>
<comment type="similarity">
    <text evidence="1">Belongs to the aconitase/IPM isomerase family. LeuC type 2 subfamily.</text>
</comment>
<accession>Q726X4</accession>
<proteinExistence type="evidence at protein level"/>
<evidence type="ECO:0000255" key="1">
    <source>
        <dbReference type="HAMAP-Rule" id="MF_01027"/>
    </source>
</evidence>
<organism>
    <name type="scientific">Nitratidesulfovibrio vulgaris (strain ATCC 29579 / DSM 644 / CCUG 34227 / NCIMB 8303 / VKM B-1760 / Hildenborough)</name>
    <name type="common">Desulfovibrio vulgaris</name>
    <dbReference type="NCBI Taxonomy" id="882"/>
    <lineage>
        <taxon>Bacteria</taxon>
        <taxon>Pseudomonadati</taxon>
        <taxon>Thermodesulfobacteriota</taxon>
        <taxon>Desulfovibrionia</taxon>
        <taxon>Desulfovibrionales</taxon>
        <taxon>Desulfovibrionaceae</taxon>
        <taxon>Nitratidesulfovibrio</taxon>
    </lineage>
</organism>
<dbReference type="EC" id="4.2.1.33" evidence="1"/>
<dbReference type="EMBL" id="AE017285">
    <property type="protein sequence ID" value="AAS97453.1"/>
    <property type="molecule type" value="Genomic_DNA"/>
</dbReference>
<dbReference type="RefSeq" id="WP_010940241.1">
    <property type="nucleotide sequence ID" value="NC_002937.3"/>
</dbReference>
<dbReference type="RefSeq" id="YP_012193.1">
    <property type="nucleotide sequence ID" value="NC_002937.3"/>
</dbReference>
<dbReference type="SMR" id="Q726X4"/>
<dbReference type="IntAct" id="Q726X4">
    <property type="interactions" value="3"/>
</dbReference>
<dbReference type="STRING" id="882.DVU_2982"/>
<dbReference type="PaxDb" id="882-DVU_2982"/>
<dbReference type="EnsemblBacteria" id="AAS97453">
    <property type="protein sequence ID" value="AAS97453"/>
    <property type="gene ID" value="DVU_2982"/>
</dbReference>
<dbReference type="KEGG" id="dvu:DVU_2982"/>
<dbReference type="PATRIC" id="fig|882.5.peg.2699"/>
<dbReference type="eggNOG" id="COG0065">
    <property type="taxonomic scope" value="Bacteria"/>
</dbReference>
<dbReference type="HOGENOM" id="CLU_006714_3_4_7"/>
<dbReference type="OrthoDB" id="9764318at2"/>
<dbReference type="PhylomeDB" id="Q726X4"/>
<dbReference type="UniPathway" id="UPA00048">
    <property type="reaction ID" value="UER00071"/>
</dbReference>
<dbReference type="Proteomes" id="UP000002194">
    <property type="component" value="Chromosome"/>
</dbReference>
<dbReference type="GO" id="GO:0003861">
    <property type="term" value="F:3-isopropylmalate dehydratase activity"/>
    <property type="evidence" value="ECO:0007669"/>
    <property type="project" value="UniProtKB-UniRule"/>
</dbReference>
<dbReference type="GO" id="GO:0051539">
    <property type="term" value="F:4 iron, 4 sulfur cluster binding"/>
    <property type="evidence" value="ECO:0007669"/>
    <property type="project" value="UniProtKB-KW"/>
</dbReference>
<dbReference type="GO" id="GO:0046872">
    <property type="term" value="F:metal ion binding"/>
    <property type="evidence" value="ECO:0007669"/>
    <property type="project" value="UniProtKB-KW"/>
</dbReference>
<dbReference type="GO" id="GO:0009098">
    <property type="term" value="P:L-leucine biosynthetic process"/>
    <property type="evidence" value="ECO:0007669"/>
    <property type="project" value="UniProtKB-UniRule"/>
</dbReference>
<dbReference type="CDD" id="cd01583">
    <property type="entry name" value="IPMI"/>
    <property type="match status" value="1"/>
</dbReference>
<dbReference type="Gene3D" id="3.30.499.10">
    <property type="entry name" value="Aconitase, domain 3"/>
    <property type="match status" value="2"/>
</dbReference>
<dbReference type="HAMAP" id="MF_01027">
    <property type="entry name" value="LeuC_type2"/>
    <property type="match status" value="1"/>
</dbReference>
<dbReference type="InterPro" id="IPR015931">
    <property type="entry name" value="Acnase/IPM_dHydase_lsu_aba_1/3"/>
</dbReference>
<dbReference type="InterPro" id="IPR001030">
    <property type="entry name" value="Acoase/IPM_deHydtase_lsu_aba"/>
</dbReference>
<dbReference type="InterPro" id="IPR018136">
    <property type="entry name" value="Aconitase_4Fe-4S_BS"/>
</dbReference>
<dbReference type="InterPro" id="IPR036008">
    <property type="entry name" value="Aconitase_4Fe-4S_dom"/>
</dbReference>
<dbReference type="InterPro" id="IPR011826">
    <property type="entry name" value="HAcnase/IPMdehydase_lsu_prok"/>
</dbReference>
<dbReference type="InterPro" id="IPR006251">
    <property type="entry name" value="Homoacnase/IPMdehydase_lsu"/>
</dbReference>
<dbReference type="InterPro" id="IPR050067">
    <property type="entry name" value="IPM_dehydratase_rel_enz"/>
</dbReference>
<dbReference type="InterPro" id="IPR033941">
    <property type="entry name" value="IPMI_cat"/>
</dbReference>
<dbReference type="NCBIfam" id="TIGR01343">
    <property type="entry name" value="hacA_fam"/>
    <property type="match status" value="1"/>
</dbReference>
<dbReference type="NCBIfam" id="TIGR02086">
    <property type="entry name" value="IPMI_arch"/>
    <property type="match status" value="1"/>
</dbReference>
<dbReference type="NCBIfam" id="NF001614">
    <property type="entry name" value="PRK00402.1"/>
    <property type="match status" value="1"/>
</dbReference>
<dbReference type="PANTHER" id="PTHR43822:SF16">
    <property type="entry name" value="3-ISOPROPYLMALATE DEHYDRATASE LARGE SUBUNIT 2"/>
    <property type="match status" value="1"/>
</dbReference>
<dbReference type="PANTHER" id="PTHR43822">
    <property type="entry name" value="HOMOACONITASE, MITOCHONDRIAL-RELATED"/>
    <property type="match status" value="1"/>
</dbReference>
<dbReference type="Pfam" id="PF00330">
    <property type="entry name" value="Aconitase"/>
    <property type="match status" value="2"/>
</dbReference>
<dbReference type="PRINTS" id="PR00415">
    <property type="entry name" value="ACONITASE"/>
</dbReference>
<dbReference type="SUPFAM" id="SSF53732">
    <property type="entry name" value="Aconitase iron-sulfur domain"/>
    <property type="match status" value="1"/>
</dbReference>
<dbReference type="PROSITE" id="PS00450">
    <property type="entry name" value="ACONITASE_1"/>
    <property type="match status" value="1"/>
</dbReference>
<dbReference type="PROSITE" id="PS01244">
    <property type="entry name" value="ACONITASE_2"/>
    <property type="match status" value="1"/>
</dbReference>
<feature type="chain" id="PRO_1000063646" description="3-isopropylmalate dehydratase large subunit">
    <location>
        <begin position="1"/>
        <end position="419"/>
    </location>
</feature>
<feature type="binding site" evidence="1">
    <location>
        <position position="300"/>
    </location>
    <ligand>
        <name>[4Fe-4S] cluster</name>
        <dbReference type="ChEBI" id="CHEBI:49883"/>
    </ligand>
</feature>
<feature type="binding site" evidence="1">
    <location>
        <position position="360"/>
    </location>
    <ligand>
        <name>[4Fe-4S] cluster</name>
        <dbReference type="ChEBI" id="CHEBI:49883"/>
    </ligand>
</feature>
<feature type="binding site" evidence="1">
    <location>
        <position position="363"/>
    </location>
    <ligand>
        <name>[4Fe-4S] cluster</name>
        <dbReference type="ChEBI" id="CHEBI:49883"/>
    </ligand>
</feature>